<gene>
    <name evidence="1" type="primary">hisF</name>
    <name type="ordered locus">PSPTO_5334</name>
</gene>
<protein>
    <recommendedName>
        <fullName evidence="1">Imidazole glycerol phosphate synthase subunit HisF</fullName>
        <ecNumber evidence="1">4.3.2.10</ecNumber>
    </recommendedName>
    <alternativeName>
        <fullName evidence="1">IGP synthase cyclase subunit</fullName>
    </alternativeName>
    <alternativeName>
        <fullName evidence="1">IGP synthase subunit HisF</fullName>
    </alternativeName>
    <alternativeName>
        <fullName evidence="1">ImGP synthase subunit HisF</fullName>
        <shortName evidence="1">IGPS subunit HisF</shortName>
    </alternativeName>
</protein>
<dbReference type="EC" id="4.3.2.10" evidence="1"/>
<dbReference type="EMBL" id="AE016853">
    <property type="protein sequence ID" value="AAO58760.1"/>
    <property type="molecule type" value="Genomic_DNA"/>
</dbReference>
<dbReference type="RefSeq" id="NP_795065.1">
    <property type="nucleotide sequence ID" value="NC_004578.1"/>
</dbReference>
<dbReference type="RefSeq" id="WP_005767116.1">
    <property type="nucleotide sequence ID" value="NC_004578.1"/>
</dbReference>
<dbReference type="SMR" id="Q87UG4"/>
<dbReference type="STRING" id="223283.PSPTO_5334"/>
<dbReference type="GeneID" id="1187019"/>
<dbReference type="KEGG" id="pst:PSPTO_5334"/>
<dbReference type="PATRIC" id="fig|223283.9.peg.5461"/>
<dbReference type="eggNOG" id="COG0107">
    <property type="taxonomic scope" value="Bacteria"/>
</dbReference>
<dbReference type="HOGENOM" id="CLU_048577_4_0_6"/>
<dbReference type="OrthoDB" id="9781903at2"/>
<dbReference type="PhylomeDB" id="Q87UG4"/>
<dbReference type="UniPathway" id="UPA00031">
    <property type="reaction ID" value="UER00010"/>
</dbReference>
<dbReference type="Proteomes" id="UP000002515">
    <property type="component" value="Chromosome"/>
</dbReference>
<dbReference type="GO" id="GO:0005737">
    <property type="term" value="C:cytoplasm"/>
    <property type="evidence" value="ECO:0007669"/>
    <property type="project" value="UniProtKB-SubCell"/>
</dbReference>
<dbReference type="GO" id="GO:0000107">
    <property type="term" value="F:imidazoleglycerol-phosphate synthase activity"/>
    <property type="evidence" value="ECO:0007669"/>
    <property type="project" value="UniProtKB-UniRule"/>
</dbReference>
<dbReference type="GO" id="GO:0016829">
    <property type="term" value="F:lyase activity"/>
    <property type="evidence" value="ECO:0007669"/>
    <property type="project" value="UniProtKB-KW"/>
</dbReference>
<dbReference type="GO" id="GO:0000105">
    <property type="term" value="P:L-histidine biosynthetic process"/>
    <property type="evidence" value="ECO:0007669"/>
    <property type="project" value="UniProtKB-UniRule"/>
</dbReference>
<dbReference type="CDD" id="cd04731">
    <property type="entry name" value="HisF"/>
    <property type="match status" value="1"/>
</dbReference>
<dbReference type="FunFam" id="3.20.20.70:FF:000006">
    <property type="entry name" value="Imidazole glycerol phosphate synthase subunit HisF"/>
    <property type="match status" value="1"/>
</dbReference>
<dbReference type="Gene3D" id="3.20.20.70">
    <property type="entry name" value="Aldolase class I"/>
    <property type="match status" value="1"/>
</dbReference>
<dbReference type="HAMAP" id="MF_01013">
    <property type="entry name" value="HisF"/>
    <property type="match status" value="1"/>
</dbReference>
<dbReference type="InterPro" id="IPR013785">
    <property type="entry name" value="Aldolase_TIM"/>
</dbReference>
<dbReference type="InterPro" id="IPR006062">
    <property type="entry name" value="His_biosynth"/>
</dbReference>
<dbReference type="InterPro" id="IPR004651">
    <property type="entry name" value="HisF"/>
</dbReference>
<dbReference type="InterPro" id="IPR050064">
    <property type="entry name" value="IGPS_HisA/HisF"/>
</dbReference>
<dbReference type="InterPro" id="IPR011060">
    <property type="entry name" value="RibuloseP-bd_barrel"/>
</dbReference>
<dbReference type="NCBIfam" id="TIGR00735">
    <property type="entry name" value="hisF"/>
    <property type="match status" value="1"/>
</dbReference>
<dbReference type="PANTHER" id="PTHR21235:SF2">
    <property type="entry name" value="IMIDAZOLE GLYCEROL PHOSPHATE SYNTHASE HISHF"/>
    <property type="match status" value="1"/>
</dbReference>
<dbReference type="PANTHER" id="PTHR21235">
    <property type="entry name" value="IMIDAZOLE GLYCEROL PHOSPHATE SYNTHASE SUBUNIT HISF/H IGP SYNTHASE SUBUNIT HISF/H"/>
    <property type="match status" value="1"/>
</dbReference>
<dbReference type="Pfam" id="PF00977">
    <property type="entry name" value="His_biosynth"/>
    <property type="match status" value="1"/>
</dbReference>
<dbReference type="SUPFAM" id="SSF51366">
    <property type="entry name" value="Ribulose-phoshate binding barrel"/>
    <property type="match status" value="1"/>
</dbReference>
<evidence type="ECO:0000255" key="1">
    <source>
        <dbReference type="HAMAP-Rule" id="MF_01013"/>
    </source>
</evidence>
<reference key="1">
    <citation type="journal article" date="2003" name="Proc. Natl. Acad. Sci. U.S.A.">
        <title>The complete genome sequence of the Arabidopsis and tomato pathogen Pseudomonas syringae pv. tomato DC3000.</title>
        <authorList>
            <person name="Buell C.R."/>
            <person name="Joardar V."/>
            <person name="Lindeberg M."/>
            <person name="Selengut J."/>
            <person name="Paulsen I.T."/>
            <person name="Gwinn M.L."/>
            <person name="Dodson R.J."/>
            <person name="DeBoy R.T."/>
            <person name="Durkin A.S."/>
            <person name="Kolonay J.F."/>
            <person name="Madupu R."/>
            <person name="Daugherty S.C."/>
            <person name="Brinkac L.M."/>
            <person name="Beanan M.J."/>
            <person name="Haft D.H."/>
            <person name="Nelson W.C."/>
            <person name="Davidsen T.M."/>
            <person name="Zafar N."/>
            <person name="Zhou L."/>
            <person name="Liu J."/>
            <person name="Yuan Q."/>
            <person name="Khouri H.M."/>
            <person name="Fedorova N.B."/>
            <person name="Tran B."/>
            <person name="Russell D."/>
            <person name="Berry K.J."/>
            <person name="Utterback T.R."/>
            <person name="Van Aken S.E."/>
            <person name="Feldblyum T.V."/>
            <person name="D'Ascenzo M."/>
            <person name="Deng W.-L."/>
            <person name="Ramos A.R."/>
            <person name="Alfano J.R."/>
            <person name="Cartinhour S."/>
            <person name="Chatterjee A.K."/>
            <person name="Delaney T.P."/>
            <person name="Lazarowitz S.G."/>
            <person name="Martin G.B."/>
            <person name="Schneider D.J."/>
            <person name="Tang X."/>
            <person name="Bender C.L."/>
            <person name="White O."/>
            <person name="Fraser C.M."/>
            <person name="Collmer A."/>
        </authorList>
    </citation>
    <scope>NUCLEOTIDE SEQUENCE [LARGE SCALE GENOMIC DNA]</scope>
    <source>
        <strain>ATCC BAA-871 / DC3000</strain>
    </source>
</reference>
<proteinExistence type="inferred from homology"/>
<feature type="chain" id="PRO_0000142212" description="Imidazole glycerol phosphate synthase subunit HisF">
    <location>
        <begin position="1"/>
        <end position="256"/>
    </location>
</feature>
<feature type="active site" evidence="1">
    <location>
        <position position="12"/>
    </location>
</feature>
<feature type="active site" evidence="1">
    <location>
        <position position="131"/>
    </location>
</feature>
<accession>Q87UG4</accession>
<comment type="function">
    <text evidence="1">IGPS catalyzes the conversion of PRFAR and glutamine to IGP, AICAR and glutamate. The HisF subunit catalyzes the cyclization activity that produces IGP and AICAR from PRFAR using the ammonia provided by the HisH subunit.</text>
</comment>
<comment type="catalytic activity">
    <reaction evidence="1">
        <text>5-[(5-phospho-1-deoxy-D-ribulos-1-ylimino)methylamino]-1-(5-phospho-beta-D-ribosyl)imidazole-4-carboxamide + L-glutamine = D-erythro-1-(imidazol-4-yl)glycerol 3-phosphate + 5-amino-1-(5-phospho-beta-D-ribosyl)imidazole-4-carboxamide + L-glutamate + H(+)</text>
        <dbReference type="Rhea" id="RHEA:24793"/>
        <dbReference type="ChEBI" id="CHEBI:15378"/>
        <dbReference type="ChEBI" id="CHEBI:29985"/>
        <dbReference type="ChEBI" id="CHEBI:58278"/>
        <dbReference type="ChEBI" id="CHEBI:58359"/>
        <dbReference type="ChEBI" id="CHEBI:58475"/>
        <dbReference type="ChEBI" id="CHEBI:58525"/>
        <dbReference type="EC" id="4.3.2.10"/>
    </reaction>
</comment>
<comment type="pathway">
    <text evidence="1">Amino-acid biosynthesis; L-histidine biosynthesis; L-histidine from 5-phospho-alpha-D-ribose 1-diphosphate: step 5/9.</text>
</comment>
<comment type="subunit">
    <text evidence="1">Heterodimer of HisH and HisF.</text>
</comment>
<comment type="subcellular location">
    <subcellularLocation>
        <location evidence="1">Cytoplasm</location>
    </subcellularLocation>
</comment>
<comment type="similarity">
    <text evidence="1">Belongs to the HisA/HisF family.</text>
</comment>
<sequence>MALAKRIIPCLDVDNGRVVKGVKFENIRDAGDPVEIARRYDEQGADEITFLDITASVDGRDTTLHTVERMASQVFIPLTVGGGVRTVQDIRNLLNAGADKVSINTAAVFNPEFVGEAAARFGSQCIVVAIDAKRVSGPGEAPRWEIFTHGGRKPTGLDAVLWAKKMEDLGAGEILLTSMDQDGMKNGFDLGVTRAISDALGIPVIASGGVGNLEHLAAGVIEGHASAVLAASIFHFGEYTVPEAKAYMASRGIVVR</sequence>
<name>HIS6_PSESM</name>
<keyword id="KW-0028">Amino-acid biosynthesis</keyword>
<keyword id="KW-0963">Cytoplasm</keyword>
<keyword id="KW-0368">Histidine biosynthesis</keyword>
<keyword id="KW-0456">Lyase</keyword>
<keyword id="KW-1185">Reference proteome</keyword>
<organism>
    <name type="scientific">Pseudomonas syringae pv. tomato (strain ATCC BAA-871 / DC3000)</name>
    <dbReference type="NCBI Taxonomy" id="223283"/>
    <lineage>
        <taxon>Bacteria</taxon>
        <taxon>Pseudomonadati</taxon>
        <taxon>Pseudomonadota</taxon>
        <taxon>Gammaproteobacteria</taxon>
        <taxon>Pseudomonadales</taxon>
        <taxon>Pseudomonadaceae</taxon>
        <taxon>Pseudomonas</taxon>
    </lineage>
</organism>